<feature type="chain" id="PRO_0000322782" description="Holliday junction branch migration complex subunit RuvB">
    <location>
        <begin position="1"/>
        <end position="358"/>
    </location>
</feature>
<feature type="region of interest" description="Large ATPase domain (RuvB-L)" evidence="1">
    <location>
        <begin position="1"/>
        <end position="183"/>
    </location>
</feature>
<feature type="region of interest" description="Small ATPAse domain (RuvB-S)" evidence="1">
    <location>
        <begin position="184"/>
        <end position="254"/>
    </location>
</feature>
<feature type="region of interest" description="Head domain (RuvB-H)" evidence="1">
    <location>
        <begin position="257"/>
        <end position="358"/>
    </location>
</feature>
<feature type="binding site" evidence="1">
    <location>
        <position position="22"/>
    </location>
    <ligand>
        <name>ATP</name>
        <dbReference type="ChEBI" id="CHEBI:30616"/>
    </ligand>
</feature>
<feature type="binding site" evidence="1">
    <location>
        <position position="23"/>
    </location>
    <ligand>
        <name>ATP</name>
        <dbReference type="ChEBI" id="CHEBI:30616"/>
    </ligand>
</feature>
<feature type="binding site" evidence="1">
    <location>
        <position position="64"/>
    </location>
    <ligand>
        <name>ATP</name>
        <dbReference type="ChEBI" id="CHEBI:30616"/>
    </ligand>
</feature>
<feature type="binding site" evidence="1">
    <location>
        <position position="67"/>
    </location>
    <ligand>
        <name>ATP</name>
        <dbReference type="ChEBI" id="CHEBI:30616"/>
    </ligand>
</feature>
<feature type="binding site" evidence="1">
    <location>
        <position position="68"/>
    </location>
    <ligand>
        <name>ATP</name>
        <dbReference type="ChEBI" id="CHEBI:30616"/>
    </ligand>
</feature>
<feature type="binding site" evidence="1">
    <location>
        <position position="68"/>
    </location>
    <ligand>
        <name>Mg(2+)</name>
        <dbReference type="ChEBI" id="CHEBI:18420"/>
    </ligand>
</feature>
<feature type="binding site" evidence="1">
    <location>
        <position position="69"/>
    </location>
    <ligand>
        <name>ATP</name>
        <dbReference type="ChEBI" id="CHEBI:30616"/>
    </ligand>
</feature>
<feature type="binding site" evidence="1">
    <location>
        <begin position="130"/>
        <end position="132"/>
    </location>
    <ligand>
        <name>ATP</name>
        <dbReference type="ChEBI" id="CHEBI:30616"/>
    </ligand>
</feature>
<feature type="binding site" evidence="1">
    <location>
        <position position="173"/>
    </location>
    <ligand>
        <name>ATP</name>
        <dbReference type="ChEBI" id="CHEBI:30616"/>
    </ligand>
</feature>
<feature type="binding site" evidence="1">
    <location>
        <position position="183"/>
    </location>
    <ligand>
        <name>ATP</name>
        <dbReference type="ChEBI" id="CHEBI:30616"/>
    </ligand>
</feature>
<feature type="binding site" evidence="1">
    <location>
        <position position="220"/>
    </location>
    <ligand>
        <name>ATP</name>
        <dbReference type="ChEBI" id="CHEBI:30616"/>
    </ligand>
</feature>
<feature type="binding site" evidence="1">
    <location>
        <position position="312"/>
    </location>
    <ligand>
        <name>DNA</name>
        <dbReference type="ChEBI" id="CHEBI:16991"/>
    </ligand>
</feature>
<feature type="binding site" evidence="1">
    <location>
        <position position="317"/>
    </location>
    <ligand>
        <name>DNA</name>
        <dbReference type="ChEBI" id="CHEBI:16991"/>
    </ligand>
</feature>
<proteinExistence type="inferred from homology"/>
<reference key="1">
    <citation type="journal article" date="2006" name="PLoS Genet.">
        <title>Secrets of soil survival revealed by the genome sequence of Arthrobacter aurescens TC1.</title>
        <authorList>
            <person name="Mongodin E.F."/>
            <person name="Shapir N."/>
            <person name="Daugherty S.C."/>
            <person name="DeBoy R.T."/>
            <person name="Emerson J.B."/>
            <person name="Shvartzbeyn A."/>
            <person name="Radune D."/>
            <person name="Vamathevan J."/>
            <person name="Riggs F."/>
            <person name="Grinberg V."/>
            <person name="Khouri H.M."/>
            <person name="Wackett L.P."/>
            <person name="Nelson K.E."/>
            <person name="Sadowsky M.J."/>
        </authorList>
    </citation>
    <scope>NUCLEOTIDE SEQUENCE [LARGE SCALE GENOMIC DNA]</scope>
    <source>
        <strain>TC1</strain>
    </source>
</reference>
<evidence type="ECO:0000255" key="1">
    <source>
        <dbReference type="HAMAP-Rule" id="MF_00016"/>
    </source>
</evidence>
<organism>
    <name type="scientific">Paenarthrobacter aurescens (strain TC1)</name>
    <dbReference type="NCBI Taxonomy" id="290340"/>
    <lineage>
        <taxon>Bacteria</taxon>
        <taxon>Bacillati</taxon>
        <taxon>Actinomycetota</taxon>
        <taxon>Actinomycetes</taxon>
        <taxon>Micrococcales</taxon>
        <taxon>Micrococcaceae</taxon>
        <taxon>Paenarthrobacter</taxon>
    </lineage>
</organism>
<dbReference type="EC" id="3.6.4.-" evidence="1"/>
<dbReference type="EMBL" id="CP000474">
    <property type="protein sequence ID" value="ABM06845.1"/>
    <property type="molecule type" value="Genomic_DNA"/>
</dbReference>
<dbReference type="RefSeq" id="WP_011774980.1">
    <property type="nucleotide sequence ID" value="NC_008711.1"/>
</dbReference>
<dbReference type="SMR" id="A1R724"/>
<dbReference type="STRING" id="290340.AAur_2297"/>
<dbReference type="KEGG" id="aau:AAur_2297"/>
<dbReference type="eggNOG" id="COG2255">
    <property type="taxonomic scope" value="Bacteria"/>
</dbReference>
<dbReference type="HOGENOM" id="CLU_055599_1_0_11"/>
<dbReference type="OrthoDB" id="9804478at2"/>
<dbReference type="Proteomes" id="UP000000637">
    <property type="component" value="Chromosome"/>
</dbReference>
<dbReference type="GO" id="GO:0005737">
    <property type="term" value="C:cytoplasm"/>
    <property type="evidence" value="ECO:0007669"/>
    <property type="project" value="UniProtKB-SubCell"/>
</dbReference>
<dbReference type="GO" id="GO:0048476">
    <property type="term" value="C:Holliday junction resolvase complex"/>
    <property type="evidence" value="ECO:0007669"/>
    <property type="project" value="UniProtKB-UniRule"/>
</dbReference>
<dbReference type="GO" id="GO:0005524">
    <property type="term" value="F:ATP binding"/>
    <property type="evidence" value="ECO:0007669"/>
    <property type="project" value="UniProtKB-UniRule"/>
</dbReference>
<dbReference type="GO" id="GO:0016887">
    <property type="term" value="F:ATP hydrolysis activity"/>
    <property type="evidence" value="ECO:0007669"/>
    <property type="project" value="InterPro"/>
</dbReference>
<dbReference type="GO" id="GO:0000400">
    <property type="term" value="F:four-way junction DNA binding"/>
    <property type="evidence" value="ECO:0007669"/>
    <property type="project" value="UniProtKB-UniRule"/>
</dbReference>
<dbReference type="GO" id="GO:0009378">
    <property type="term" value="F:four-way junction helicase activity"/>
    <property type="evidence" value="ECO:0007669"/>
    <property type="project" value="InterPro"/>
</dbReference>
<dbReference type="GO" id="GO:0006310">
    <property type="term" value="P:DNA recombination"/>
    <property type="evidence" value="ECO:0007669"/>
    <property type="project" value="UniProtKB-UniRule"/>
</dbReference>
<dbReference type="GO" id="GO:0006281">
    <property type="term" value="P:DNA repair"/>
    <property type="evidence" value="ECO:0007669"/>
    <property type="project" value="UniProtKB-UniRule"/>
</dbReference>
<dbReference type="CDD" id="cd00009">
    <property type="entry name" value="AAA"/>
    <property type="match status" value="1"/>
</dbReference>
<dbReference type="Gene3D" id="1.10.8.60">
    <property type="match status" value="1"/>
</dbReference>
<dbReference type="Gene3D" id="3.40.50.300">
    <property type="entry name" value="P-loop containing nucleotide triphosphate hydrolases"/>
    <property type="match status" value="1"/>
</dbReference>
<dbReference type="Gene3D" id="1.10.10.10">
    <property type="entry name" value="Winged helix-like DNA-binding domain superfamily/Winged helix DNA-binding domain"/>
    <property type="match status" value="1"/>
</dbReference>
<dbReference type="HAMAP" id="MF_00016">
    <property type="entry name" value="DNA_HJ_migration_RuvB"/>
    <property type="match status" value="1"/>
</dbReference>
<dbReference type="InterPro" id="IPR003593">
    <property type="entry name" value="AAA+_ATPase"/>
</dbReference>
<dbReference type="InterPro" id="IPR041445">
    <property type="entry name" value="AAA_lid_4"/>
</dbReference>
<dbReference type="InterPro" id="IPR004605">
    <property type="entry name" value="DNA_helicase_Holl-junc_RuvB"/>
</dbReference>
<dbReference type="InterPro" id="IPR027417">
    <property type="entry name" value="P-loop_NTPase"/>
</dbReference>
<dbReference type="InterPro" id="IPR008824">
    <property type="entry name" value="RuvB-like_N"/>
</dbReference>
<dbReference type="InterPro" id="IPR008823">
    <property type="entry name" value="RuvB_C"/>
</dbReference>
<dbReference type="InterPro" id="IPR036388">
    <property type="entry name" value="WH-like_DNA-bd_sf"/>
</dbReference>
<dbReference type="InterPro" id="IPR036390">
    <property type="entry name" value="WH_DNA-bd_sf"/>
</dbReference>
<dbReference type="NCBIfam" id="NF000868">
    <property type="entry name" value="PRK00080.1"/>
    <property type="match status" value="1"/>
</dbReference>
<dbReference type="NCBIfam" id="TIGR00635">
    <property type="entry name" value="ruvB"/>
    <property type="match status" value="1"/>
</dbReference>
<dbReference type="PANTHER" id="PTHR42848">
    <property type="match status" value="1"/>
</dbReference>
<dbReference type="PANTHER" id="PTHR42848:SF1">
    <property type="entry name" value="HOLLIDAY JUNCTION BRANCH MIGRATION COMPLEX SUBUNIT RUVB"/>
    <property type="match status" value="1"/>
</dbReference>
<dbReference type="Pfam" id="PF17864">
    <property type="entry name" value="AAA_lid_4"/>
    <property type="match status" value="1"/>
</dbReference>
<dbReference type="Pfam" id="PF05491">
    <property type="entry name" value="RuvB_C"/>
    <property type="match status" value="1"/>
</dbReference>
<dbReference type="Pfam" id="PF05496">
    <property type="entry name" value="RuvB_N"/>
    <property type="match status" value="1"/>
</dbReference>
<dbReference type="SMART" id="SM00382">
    <property type="entry name" value="AAA"/>
    <property type="match status" value="1"/>
</dbReference>
<dbReference type="SUPFAM" id="SSF52540">
    <property type="entry name" value="P-loop containing nucleoside triphosphate hydrolases"/>
    <property type="match status" value="1"/>
</dbReference>
<dbReference type="SUPFAM" id="SSF46785">
    <property type="entry name" value="Winged helix' DNA-binding domain"/>
    <property type="match status" value="1"/>
</dbReference>
<sequence length="358" mass="38524">MAEPSLVSGGEEPEERVIEAALRPKNLHDFVGQHRVRKQLALVLEASKMRGRSADHVLMSGPPGLGKTTLAMIIAAEMNAPLRISSGPAIQHAGDLAAILSSLSEGEVLFLDEIHRMSRPAEEMLYMAMEDFRVDIVVGKGAGATAIPLELPPFTLVGATTRAGLLPGPLRDRFGFTGHLEFYSVAELELVLRRSAGLLDLKVNSAGFTEIAGRSRGTPRIANRLLRRVRDWALVHGIEQIDARSASAALDMYEVDERGLDRLDRSVLEALITKFNGGPVGLSTLAIAVGEEPETVETVAEPFLVREGLLGRTPRGRIAMASAWTHLGYAVPAGVFGQETLALYGEDENHAESVDTVG</sequence>
<comment type="function">
    <text evidence="1">The RuvA-RuvB-RuvC complex processes Holliday junction (HJ) DNA during genetic recombination and DNA repair, while the RuvA-RuvB complex plays an important role in the rescue of blocked DNA replication forks via replication fork reversal (RFR). RuvA specifically binds to HJ cruciform DNA, conferring on it an open structure. The RuvB hexamer acts as an ATP-dependent pump, pulling dsDNA into and through the RuvAB complex. RuvB forms 2 homohexamers on either side of HJ DNA bound by 1 or 2 RuvA tetramers; 4 subunits per hexamer contact DNA at a time. Coordinated motions by a converter formed by DNA-disengaged RuvB subunits stimulates ATP hydrolysis and nucleotide exchange. Immobilization of the converter enables RuvB to convert the ATP-contained energy into a lever motion, pulling 2 nucleotides of DNA out of the RuvA tetramer per ATP hydrolyzed, thus driving DNA branch migration. The RuvB motors rotate together with the DNA substrate, which together with the progressing nucleotide cycle form the mechanistic basis for DNA recombination by continuous HJ branch migration. Branch migration allows RuvC to scan DNA until it finds its consensus sequence, where it cleaves and resolves cruciform DNA.</text>
</comment>
<comment type="catalytic activity">
    <reaction evidence="1">
        <text>ATP + H2O = ADP + phosphate + H(+)</text>
        <dbReference type="Rhea" id="RHEA:13065"/>
        <dbReference type="ChEBI" id="CHEBI:15377"/>
        <dbReference type="ChEBI" id="CHEBI:15378"/>
        <dbReference type="ChEBI" id="CHEBI:30616"/>
        <dbReference type="ChEBI" id="CHEBI:43474"/>
        <dbReference type="ChEBI" id="CHEBI:456216"/>
    </reaction>
</comment>
<comment type="subunit">
    <text evidence="1">Homohexamer. Forms an RuvA(8)-RuvB(12)-Holliday junction (HJ) complex. HJ DNA is sandwiched between 2 RuvA tetramers; dsDNA enters through RuvA and exits via RuvB. An RuvB hexamer assembles on each DNA strand where it exits the tetramer. Each RuvB hexamer is contacted by two RuvA subunits (via domain III) on 2 adjacent RuvB subunits; this complex drives branch migration. In the full resolvosome a probable DNA-RuvA(4)-RuvB(12)-RuvC(2) complex forms which resolves the HJ.</text>
</comment>
<comment type="subcellular location">
    <subcellularLocation>
        <location evidence="1">Cytoplasm</location>
    </subcellularLocation>
</comment>
<comment type="domain">
    <text evidence="1">Has 3 domains, the large (RuvB-L) and small ATPase (RuvB-S) domains and the C-terminal head (RuvB-H) domain. The head domain binds DNA, while the ATPase domains jointly bind ATP, ADP or are empty depending on the state of the subunit in the translocation cycle. During a single DNA translocation step the structure of each domain remains the same, but their relative positions change.</text>
</comment>
<comment type="similarity">
    <text evidence="1">Belongs to the RuvB family.</text>
</comment>
<keyword id="KW-0067">ATP-binding</keyword>
<keyword id="KW-0963">Cytoplasm</keyword>
<keyword id="KW-0227">DNA damage</keyword>
<keyword id="KW-0233">DNA recombination</keyword>
<keyword id="KW-0234">DNA repair</keyword>
<keyword id="KW-0238">DNA-binding</keyword>
<keyword id="KW-0378">Hydrolase</keyword>
<keyword id="KW-0547">Nucleotide-binding</keyword>
<name>RUVB_PAEAT</name>
<gene>
    <name evidence="1" type="primary">ruvB</name>
    <name type="ordered locus">AAur_2297</name>
</gene>
<protein>
    <recommendedName>
        <fullName evidence="1">Holliday junction branch migration complex subunit RuvB</fullName>
        <ecNumber evidence="1">3.6.4.-</ecNumber>
    </recommendedName>
</protein>
<accession>A1R724</accession>